<evidence type="ECO:0000250" key="1">
    <source>
        <dbReference type="UniProtKB" id="Q66H73"/>
    </source>
</evidence>
<evidence type="ECO:0000255" key="2"/>
<evidence type="ECO:0000256" key="3">
    <source>
        <dbReference type="SAM" id="MobiDB-lite"/>
    </source>
</evidence>
<evidence type="ECO:0000269" key="4">
    <source>
    </source>
</evidence>
<evidence type="ECO:0000269" key="5">
    <source>
    </source>
</evidence>
<evidence type="ECO:0000303" key="6">
    <source>
    </source>
</evidence>
<evidence type="ECO:0000305" key="7"/>
<evidence type="ECO:0007744" key="8">
    <source>
    </source>
</evidence>
<evidence type="ECO:0007744" key="9">
    <source>
    </source>
</evidence>
<evidence type="ECO:0007744" key="10">
    <source>
    </source>
</evidence>
<evidence type="ECO:0007744" key="11">
    <source>
    </source>
</evidence>
<evidence type="ECO:0007744" key="12">
    <source>
    </source>
</evidence>
<feature type="chain" id="PRO_0000234288" description="Coiled-coil domain-containing protein 82">
    <location>
        <begin position="1"/>
        <end position="544"/>
    </location>
</feature>
<feature type="region of interest" description="Disordered" evidence="3">
    <location>
        <begin position="1"/>
        <end position="294"/>
    </location>
</feature>
<feature type="coiled-coil region" evidence="2">
    <location>
        <begin position="229"/>
        <end position="256"/>
    </location>
</feature>
<feature type="compositionally biased region" description="Basic residues" evidence="3">
    <location>
        <begin position="1"/>
        <end position="14"/>
    </location>
</feature>
<feature type="compositionally biased region" description="Basic and acidic residues" evidence="3">
    <location>
        <begin position="16"/>
        <end position="27"/>
    </location>
</feature>
<feature type="compositionally biased region" description="Acidic residues" evidence="3">
    <location>
        <begin position="39"/>
        <end position="67"/>
    </location>
</feature>
<feature type="compositionally biased region" description="Polar residues" evidence="3">
    <location>
        <begin position="88"/>
        <end position="108"/>
    </location>
</feature>
<feature type="compositionally biased region" description="Basic and acidic residues" evidence="3">
    <location>
        <begin position="112"/>
        <end position="132"/>
    </location>
</feature>
<feature type="compositionally biased region" description="Basic and acidic residues" evidence="3">
    <location>
        <begin position="223"/>
        <end position="248"/>
    </location>
</feature>
<feature type="compositionally biased region" description="Acidic residues" evidence="3">
    <location>
        <begin position="273"/>
        <end position="294"/>
    </location>
</feature>
<feature type="modified residue" description="Phosphoserine" evidence="12">
    <location>
        <position position="88"/>
    </location>
</feature>
<feature type="modified residue" description="Phosphoserine" evidence="8 10 11 12">
    <location>
        <position position="131"/>
    </location>
</feature>
<feature type="modified residue" description="Phosphoserine" evidence="8 10 11 12">
    <location>
        <position position="154"/>
    </location>
</feature>
<feature type="modified residue" description="Phosphoserine" evidence="1">
    <location>
        <position position="195"/>
    </location>
</feature>
<feature type="modified residue" description="Phosphoserine" evidence="9 12">
    <location>
        <position position="219"/>
    </location>
</feature>
<feature type="modified residue" description="Phosphothreonine" evidence="11 12">
    <location>
        <position position="227"/>
    </location>
</feature>
<feature type="modified residue" description="Phosphoserine" evidence="12">
    <location>
        <position position="329"/>
    </location>
</feature>
<feature type="splice variant" id="VSP_035403" description="In isoform 2." evidence="6">
    <original>YSFSDHYTHFERVV</original>
    <variation>CKFNIKKMFHELFS</variation>
    <location>
        <begin position="331"/>
        <end position="344"/>
    </location>
</feature>
<feature type="splice variant" id="VSP_035404" description="In isoform 2." evidence="6">
    <location>
        <begin position="345"/>
        <end position="544"/>
    </location>
</feature>
<feature type="sequence variant" id="VAR_050764" description="In dbSNP:rs3748261.">
    <original>K</original>
    <variation>R</variation>
    <location>
        <position position="128"/>
    </location>
</feature>
<feature type="sequence variant" id="VAR_026164" description="In dbSNP:rs17851661." evidence="5">
    <original>Q</original>
    <variation>E</variation>
    <location>
        <position position="149"/>
    </location>
</feature>
<feature type="sequence variant" id="VAR_026165" description="In dbSNP:rs10831519." evidence="4 5">
    <original>Q</original>
    <variation>R</variation>
    <location>
        <position position="327"/>
    </location>
</feature>
<protein>
    <recommendedName>
        <fullName>Coiled-coil domain-containing protein 82</fullName>
    </recommendedName>
</protein>
<organism>
    <name type="scientific">Homo sapiens</name>
    <name type="common">Human</name>
    <dbReference type="NCBI Taxonomy" id="9606"/>
    <lineage>
        <taxon>Eukaryota</taxon>
        <taxon>Metazoa</taxon>
        <taxon>Chordata</taxon>
        <taxon>Craniata</taxon>
        <taxon>Vertebrata</taxon>
        <taxon>Euteleostomi</taxon>
        <taxon>Mammalia</taxon>
        <taxon>Eutheria</taxon>
        <taxon>Euarchontoglires</taxon>
        <taxon>Primates</taxon>
        <taxon>Haplorrhini</taxon>
        <taxon>Catarrhini</taxon>
        <taxon>Hominidae</taxon>
        <taxon>Homo</taxon>
    </lineage>
</organism>
<reference key="1">
    <citation type="journal article" date="2000" name="Proc. Natl. Acad. Sci. U.S.A.">
        <title>Gene expression profiling in the human hypothalamus-pituitary-adrenal axis and full-length cDNA cloning.</title>
        <authorList>
            <person name="Hu R.-M."/>
            <person name="Han Z.-G."/>
            <person name="Song H.-D."/>
            <person name="Peng Y.-D."/>
            <person name="Huang Q.-H."/>
            <person name="Ren S.-X."/>
            <person name="Gu Y.-J."/>
            <person name="Huang C.-H."/>
            <person name="Li Y.-B."/>
            <person name="Jiang C.-L."/>
            <person name="Fu G."/>
            <person name="Zhang Q.-H."/>
            <person name="Gu B.-W."/>
            <person name="Dai M."/>
            <person name="Mao Y.-F."/>
            <person name="Gao G.-F."/>
            <person name="Rong R."/>
            <person name="Ye M."/>
            <person name="Zhou J."/>
            <person name="Xu S.-H."/>
            <person name="Gu J."/>
            <person name="Shi J.-X."/>
            <person name="Jin W.-R."/>
            <person name="Zhang C.-K."/>
            <person name="Wu T.-M."/>
            <person name="Huang G.-Y."/>
            <person name="Chen Z."/>
            <person name="Chen M.-D."/>
            <person name="Chen J.-L."/>
        </authorList>
    </citation>
    <scope>NUCLEOTIDE SEQUENCE [LARGE SCALE MRNA] (ISOFORM 1)</scope>
    <source>
        <tissue>Hypothalamus</tissue>
    </source>
</reference>
<reference key="2">
    <citation type="journal article" date="2004" name="Nat. Genet.">
        <title>Complete sequencing and characterization of 21,243 full-length human cDNAs.</title>
        <authorList>
            <person name="Ota T."/>
            <person name="Suzuki Y."/>
            <person name="Nishikawa T."/>
            <person name="Otsuki T."/>
            <person name="Sugiyama T."/>
            <person name="Irie R."/>
            <person name="Wakamatsu A."/>
            <person name="Hayashi K."/>
            <person name="Sato H."/>
            <person name="Nagai K."/>
            <person name="Kimura K."/>
            <person name="Makita H."/>
            <person name="Sekine M."/>
            <person name="Obayashi M."/>
            <person name="Nishi T."/>
            <person name="Shibahara T."/>
            <person name="Tanaka T."/>
            <person name="Ishii S."/>
            <person name="Yamamoto J."/>
            <person name="Saito K."/>
            <person name="Kawai Y."/>
            <person name="Isono Y."/>
            <person name="Nakamura Y."/>
            <person name="Nagahari K."/>
            <person name="Murakami K."/>
            <person name="Yasuda T."/>
            <person name="Iwayanagi T."/>
            <person name="Wagatsuma M."/>
            <person name="Shiratori A."/>
            <person name="Sudo H."/>
            <person name="Hosoiri T."/>
            <person name="Kaku Y."/>
            <person name="Kodaira H."/>
            <person name="Kondo H."/>
            <person name="Sugawara M."/>
            <person name="Takahashi M."/>
            <person name="Kanda K."/>
            <person name="Yokoi T."/>
            <person name="Furuya T."/>
            <person name="Kikkawa E."/>
            <person name="Omura Y."/>
            <person name="Abe K."/>
            <person name="Kamihara K."/>
            <person name="Katsuta N."/>
            <person name="Sato K."/>
            <person name="Tanikawa M."/>
            <person name="Yamazaki M."/>
            <person name="Ninomiya K."/>
            <person name="Ishibashi T."/>
            <person name="Yamashita H."/>
            <person name="Murakawa K."/>
            <person name="Fujimori K."/>
            <person name="Tanai H."/>
            <person name="Kimata M."/>
            <person name="Watanabe M."/>
            <person name="Hiraoka S."/>
            <person name="Chiba Y."/>
            <person name="Ishida S."/>
            <person name="Ono Y."/>
            <person name="Takiguchi S."/>
            <person name="Watanabe S."/>
            <person name="Yosida M."/>
            <person name="Hotuta T."/>
            <person name="Kusano J."/>
            <person name="Kanehori K."/>
            <person name="Takahashi-Fujii A."/>
            <person name="Hara H."/>
            <person name="Tanase T.-O."/>
            <person name="Nomura Y."/>
            <person name="Togiya S."/>
            <person name="Komai F."/>
            <person name="Hara R."/>
            <person name="Takeuchi K."/>
            <person name="Arita M."/>
            <person name="Imose N."/>
            <person name="Musashino K."/>
            <person name="Yuuki H."/>
            <person name="Oshima A."/>
            <person name="Sasaki N."/>
            <person name="Aotsuka S."/>
            <person name="Yoshikawa Y."/>
            <person name="Matsunawa H."/>
            <person name="Ichihara T."/>
            <person name="Shiohata N."/>
            <person name="Sano S."/>
            <person name="Moriya S."/>
            <person name="Momiyama H."/>
            <person name="Satoh N."/>
            <person name="Takami S."/>
            <person name="Terashima Y."/>
            <person name="Suzuki O."/>
            <person name="Nakagawa S."/>
            <person name="Senoh A."/>
            <person name="Mizoguchi H."/>
            <person name="Goto Y."/>
            <person name="Shimizu F."/>
            <person name="Wakebe H."/>
            <person name="Hishigaki H."/>
            <person name="Watanabe T."/>
            <person name="Sugiyama A."/>
            <person name="Takemoto M."/>
            <person name="Kawakami B."/>
            <person name="Yamazaki M."/>
            <person name="Watanabe K."/>
            <person name="Kumagai A."/>
            <person name="Itakura S."/>
            <person name="Fukuzumi Y."/>
            <person name="Fujimori Y."/>
            <person name="Komiyama M."/>
            <person name="Tashiro H."/>
            <person name="Tanigami A."/>
            <person name="Fujiwara T."/>
            <person name="Ono T."/>
            <person name="Yamada K."/>
            <person name="Fujii Y."/>
            <person name="Ozaki K."/>
            <person name="Hirao M."/>
            <person name="Ohmori Y."/>
            <person name="Kawabata A."/>
            <person name="Hikiji T."/>
            <person name="Kobatake N."/>
            <person name="Inagaki H."/>
            <person name="Ikema Y."/>
            <person name="Okamoto S."/>
            <person name="Okitani R."/>
            <person name="Kawakami T."/>
            <person name="Noguchi S."/>
            <person name="Itoh T."/>
            <person name="Shigeta K."/>
            <person name="Senba T."/>
            <person name="Matsumura K."/>
            <person name="Nakajima Y."/>
            <person name="Mizuno T."/>
            <person name="Morinaga M."/>
            <person name="Sasaki M."/>
            <person name="Togashi T."/>
            <person name="Oyama M."/>
            <person name="Hata H."/>
            <person name="Watanabe M."/>
            <person name="Komatsu T."/>
            <person name="Mizushima-Sugano J."/>
            <person name="Satoh T."/>
            <person name="Shirai Y."/>
            <person name="Takahashi Y."/>
            <person name="Nakagawa K."/>
            <person name="Okumura K."/>
            <person name="Nagase T."/>
            <person name="Nomura N."/>
            <person name="Kikuchi H."/>
            <person name="Masuho Y."/>
            <person name="Yamashita R."/>
            <person name="Nakai K."/>
            <person name="Yada T."/>
            <person name="Nakamura Y."/>
            <person name="Ohara O."/>
            <person name="Isogai T."/>
            <person name="Sugano S."/>
        </authorList>
    </citation>
    <scope>NUCLEOTIDE SEQUENCE [LARGE SCALE MRNA] (ISOFORM 1)</scope>
    <scope>VARIANT ARG-327</scope>
    <source>
        <tissue>Lung</tissue>
        <tissue>Placenta</tissue>
    </source>
</reference>
<reference key="3">
    <citation type="journal article" date="2004" name="Genome Res.">
        <title>The status, quality, and expansion of the NIH full-length cDNA project: the Mammalian Gene Collection (MGC).</title>
        <authorList>
            <consortium name="The MGC Project Team"/>
        </authorList>
    </citation>
    <scope>NUCLEOTIDE SEQUENCE [LARGE SCALE MRNA] (ISOFORMS 1 AND 2)</scope>
    <scope>VARIANTS GLU-149 AND ARG-327</scope>
    <source>
        <tissue>Muscle</tissue>
        <tissue>Placenta</tissue>
    </source>
</reference>
<reference key="4">
    <citation type="journal article" date="2007" name="Science">
        <title>ATM and ATR substrate analysis reveals extensive protein networks responsive to DNA damage.</title>
        <authorList>
            <person name="Matsuoka S."/>
            <person name="Ballif B.A."/>
            <person name="Smogorzewska A."/>
            <person name="McDonald E.R. III"/>
            <person name="Hurov K.E."/>
            <person name="Luo J."/>
            <person name="Bakalarski C.E."/>
            <person name="Zhao Z."/>
            <person name="Solimini N."/>
            <person name="Lerenthal Y."/>
            <person name="Shiloh Y."/>
            <person name="Gygi S.P."/>
            <person name="Elledge S.J."/>
        </authorList>
    </citation>
    <scope>PHOSPHORYLATION [LARGE SCALE ANALYSIS] AT SER-131 AND SER-154</scope>
    <scope>IDENTIFICATION BY MASS SPECTROMETRY [LARGE SCALE ANALYSIS]</scope>
    <source>
        <tissue>Embryonic kidney</tissue>
    </source>
</reference>
<reference key="5">
    <citation type="journal article" date="2009" name="Sci. Signal.">
        <title>Quantitative phosphoproteomic analysis of T cell receptor signaling reveals system-wide modulation of protein-protein interactions.</title>
        <authorList>
            <person name="Mayya V."/>
            <person name="Lundgren D.H."/>
            <person name="Hwang S.-I."/>
            <person name="Rezaul K."/>
            <person name="Wu L."/>
            <person name="Eng J.K."/>
            <person name="Rodionov V."/>
            <person name="Han D.K."/>
        </authorList>
    </citation>
    <scope>PHOSPHORYLATION [LARGE SCALE ANALYSIS] AT SER-219</scope>
    <scope>IDENTIFICATION BY MASS SPECTROMETRY [LARGE SCALE ANALYSIS]</scope>
    <source>
        <tissue>Leukemic T-cell</tissue>
    </source>
</reference>
<reference key="6">
    <citation type="journal article" date="2010" name="Sci. Signal.">
        <title>Quantitative phosphoproteomics reveals widespread full phosphorylation site occupancy during mitosis.</title>
        <authorList>
            <person name="Olsen J.V."/>
            <person name="Vermeulen M."/>
            <person name="Santamaria A."/>
            <person name="Kumar C."/>
            <person name="Miller M.L."/>
            <person name="Jensen L.J."/>
            <person name="Gnad F."/>
            <person name="Cox J."/>
            <person name="Jensen T.S."/>
            <person name="Nigg E.A."/>
            <person name="Brunak S."/>
            <person name="Mann M."/>
        </authorList>
    </citation>
    <scope>PHOSPHORYLATION [LARGE SCALE ANALYSIS] AT SER-131 AND SER-154</scope>
    <scope>IDENTIFICATION BY MASS SPECTROMETRY [LARGE SCALE ANALYSIS]</scope>
    <source>
        <tissue>Cervix carcinoma</tissue>
    </source>
</reference>
<reference key="7">
    <citation type="journal article" date="2011" name="Sci. Signal.">
        <title>System-wide temporal characterization of the proteome and phosphoproteome of human embryonic stem cell differentiation.</title>
        <authorList>
            <person name="Rigbolt K.T."/>
            <person name="Prokhorova T.A."/>
            <person name="Akimov V."/>
            <person name="Henningsen J."/>
            <person name="Johansen P.T."/>
            <person name="Kratchmarova I."/>
            <person name="Kassem M."/>
            <person name="Mann M."/>
            <person name="Olsen J.V."/>
            <person name="Blagoev B."/>
        </authorList>
    </citation>
    <scope>PHOSPHORYLATION [LARGE SCALE ANALYSIS] AT SER-131; SER-154 AND THR-227</scope>
    <scope>IDENTIFICATION BY MASS SPECTROMETRY [LARGE SCALE ANALYSIS]</scope>
</reference>
<reference key="8">
    <citation type="journal article" date="2013" name="J. Proteome Res.">
        <title>Toward a comprehensive characterization of a human cancer cell phosphoproteome.</title>
        <authorList>
            <person name="Zhou H."/>
            <person name="Di Palma S."/>
            <person name="Preisinger C."/>
            <person name="Peng M."/>
            <person name="Polat A.N."/>
            <person name="Heck A.J."/>
            <person name="Mohammed S."/>
        </authorList>
    </citation>
    <scope>PHOSPHORYLATION [LARGE SCALE ANALYSIS] AT SER-88; SER-131; SER-154; SER-219; THR-227 AND SER-329</scope>
    <scope>IDENTIFICATION BY MASS SPECTROMETRY [LARGE SCALE ANALYSIS]</scope>
    <source>
        <tissue>Cervix carcinoma</tissue>
        <tissue>Erythroleukemia</tissue>
    </source>
</reference>
<name>CCD82_HUMAN</name>
<sequence length="544" mass="64002">MIHVRRHETRRNSKSHVPEQKSRVDWRRTKRSSISQLLDSDEELDSEEFDSDEELDSDESFENDEELDSNKGPDCNKTPGSERELNLSKIQSEGNDSKCLINSGNGSTYEEETNKIKHRNIDLQDQEKHLSQEDNDLNKQTGQIIEDDQEKHLSQEDNDLNKQTGQIIEDDLEEEDIKRGKRKRLSSVMCDSDESDDSDILVRKVGVKRPRRVVEDEGSSVEMEQKTPEKTLAAQKREKLQKLKELSKQRSRQRRSSGRDFEDSEKESCPSSDEVDEEEEEDNYESDEDGDDYIIDDFVVQDEEGDEENKNQQGEKLTTSQLKLVKQNSLYSFSDHYTHFERVVKALLINALDESFLGTLYDGTRQKSYAKDMLTSLHYLDNRFVQPRLESLVSRSRWKEQYKERVENYSNVSIHLKNPENCSCQACGLHRYCKYSVHLSGELYNTRTMQIDNFMSHDKQVFTVGRICASRTRIYHKLKHFKFKLYQECCTIAMTEEVEDEQVKETVERIFRRSKENGWIKEKYGQLEEYLNFADYFQEEKFEL</sequence>
<gene>
    <name type="primary">CCDC82</name>
    <name type="ORF">HT025</name>
</gene>
<keyword id="KW-0025">Alternative splicing</keyword>
<keyword id="KW-0175">Coiled coil</keyword>
<keyword id="KW-0597">Phosphoprotein</keyword>
<keyword id="KW-1267">Proteomics identification</keyword>
<keyword id="KW-1185">Reference proteome</keyword>
<dbReference type="EMBL" id="AF245436">
    <property type="protein sequence ID" value="AAG44484.1"/>
    <property type="molecule type" value="mRNA"/>
</dbReference>
<dbReference type="EMBL" id="AK027171">
    <property type="protein sequence ID" value="BAB15683.1"/>
    <property type="status" value="ALT_FRAME"/>
    <property type="molecule type" value="mRNA"/>
</dbReference>
<dbReference type="EMBL" id="AK056790">
    <property type="protein sequence ID" value="BAG51809.1"/>
    <property type="molecule type" value="mRNA"/>
</dbReference>
<dbReference type="EMBL" id="BC018663">
    <property type="protein sequence ID" value="AAH18663.1"/>
    <property type="molecule type" value="mRNA"/>
</dbReference>
<dbReference type="EMBL" id="BC033726">
    <property type="protein sequence ID" value="AAH33726.1"/>
    <property type="molecule type" value="mRNA"/>
</dbReference>
<dbReference type="CCDS" id="CCDS8307.1">
    <molecule id="Q8N4S0-1"/>
</dbReference>
<dbReference type="CCDS" id="CCDS86241.1">
    <molecule id="Q8N4S0-2"/>
</dbReference>
<dbReference type="RefSeq" id="NP_001305665.1">
    <molecule id="Q8N4S0-1"/>
    <property type="nucleotide sequence ID" value="NM_001318736.2"/>
</dbReference>
<dbReference type="RefSeq" id="NP_001305666.1">
    <molecule id="Q8N4S0-2"/>
    <property type="nucleotide sequence ID" value="NM_001318737.3"/>
</dbReference>
<dbReference type="RefSeq" id="NP_079001.2">
    <molecule id="Q8N4S0-1"/>
    <property type="nucleotide sequence ID" value="NM_024725.3"/>
</dbReference>
<dbReference type="RefSeq" id="XP_005274349.1">
    <molecule id="Q8N4S0-1"/>
    <property type="nucleotide sequence ID" value="XM_005274292.4"/>
</dbReference>
<dbReference type="RefSeq" id="XP_011541286.1">
    <molecule id="Q8N4S0-1"/>
    <property type="nucleotide sequence ID" value="XM_011542984.4"/>
</dbReference>
<dbReference type="RefSeq" id="XP_011541289.1">
    <molecule id="Q8N4S0-1"/>
    <property type="nucleotide sequence ID" value="XM_011542987.4"/>
</dbReference>
<dbReference type="RefSeq" id="XP_011541290.1">
    <molecule id="Q8N4S0-1"/>
    <property type="nucleotide sequence ID" value="XM_011542988.4"/>
</dbReference>
<dbReference type="RefSeq" id="XP_016873794.1">
    <property type="nucleotide sequence ID" value="XM_017018305.1"/>
</dbReference>
<dbReference type="RefSeq" id="XP_016873795.1">
    <property type="nucleotide sequence ID" value="XM_017018306.1"/>
</dbReference>
<dbReference type="RefSeq" id="XP_016873796.1">
    <molecule id="Q8N4S0-1"/>
    <property type="nucleotide sequence ID" value="XM_017018307.2"/>
</dbReference>
<dbReference type="RefSeq" id="XP_016873797.1">
    <property type="nucleotide sequence ID" value="XM_017018308.1"/>
</dbReference>
<dbReference type="RefSeq" id="XP_024304458.1">
    <molecule id="Q8N4S0-1"/>
    <property type="nucleotide sequence ID" value="XM_024448690.2"/>
</dbReference>
<dbReference type="RefSeq" id="XP_047283558.1">
    <molecule id="Q8N4S0-1"/>
    <property type="nucleotide sequence ID" value="XM_047427602.1"/>
</dbReference>
<dbReference type="RefSeq" id="XP_047283559.1">
    <molecule id="Q8N4S0-1"/>
    <property type="nucleotide sequence ID" value="XM_047427603.1"/>
</dbReference>
<dbReference type="RefSeq" id="XP_047283560.1">
    <molecule id="Q8N4S0-1"/>
    <property type="nucleotide sequence ID" value="XM_047427604.1"/>
</dbReference>
<dbReference type="RefSeq" id="XP_047283561.1">
    <molecule id="Q8N4S0-1"/>
    <property type="nucleotide sequence ID" value="XM_047427605.1"/>
</dbReference>
<dbReference type="RefSeq" id="XP_054225944.1">
    <molecule id="Q8N4S0-1"/>
    <property type="nucleotide sequence ID" value="XM_054369969.1"/>
</dbReference>
<dbReference type="RefSeq" id="XP_054225945.1">
    <molecule id="Q8N4S0-1"/>
    <property type="nucleotide sequence ID" value="XM_054369970.1"/>
</dbReference>
<dbReference type="RefSeq" id="XP_054225946.1">
    <molecule id="Q8N4S0-1"/>
    <property type="nucleotide sequence ID" value="XM_054369971.1"/>
</dbReference>
<dbReference type="RefSeq" id="XP_054225947.1">
    <molecule id="Q8N4S0-1"/>
    <property type="nucleotide sequence ID" value="XM_054369972.1"/>
</dbReference>
<dbReference type="RefSeq" id="XP_054225948.1">
    <molecule id="Q8N4S0-1"/>
    <property type="nucleotide sequence ID" value="XM_054369973.1"/>
</dbReference>
<dbReference type="RefSeq" id="XP_054225949.1">
    <molecule id="Q8N4S0-1"/>
    <property type="nucleotide sequence ID" value="XM_054369974.1"/>
</dbReference>
<dbReference type="RefSeq" id="XP_054225950.1">
    <molecule id="Q8N4S0-1"/>
    <property type="nucleotide sequence ID" value="XM_054369975.1"/>
</dbReference>
<dbReference type="RefSeq" id="XP_054225951.1">
    <molecule id="Q8N4S0-1"/>
    <property type="nucleotide sequence ID" value="XM_054369976.1"/>
</dbReference>
<dbReference type="BioGRID" id="122880">
    <property type="interactions" value="31"/>
</dbReference>
<dbReference type="FunCoup" id="Q8N4S0">
    <property type="interactions" value="2376"/>
</dbReference>
<dbReference type="IntAct" id="Q8N4S0">
    <property type="interactions" value="26"/>
</dbReference>
<dbReference type="STRING" id="9606.ENSP00000495063"/>
<dbReference type="iPTMnet" id="Q8N4S0"/>
<dbReference type="MetOSite" id="Q8N4S0"/>
<dbReference type="PhosphoSitePlus" id="Q8N4S0"/>
<dbReference type="BioMuta" id="CCDC82"/>
<dbReference type="DMDM" id="97046260"/>
<dbReference type="jPOST" id="Q8N4S0"/>
<dbReference type="MassIVE" id="Q8N4S0"/>
<dbReference type="PaxDb" id="9606-ENSP00000278520"/>
<dbReference type="PeptideAtlas" id="Q8N4S0"/>
<dbReference type="ProteomicsDB" id="71960">
    <molecule id="Q8N4S0-1"/>
</dbReference>
<dbReference type="ProteomicsDB" id="71961">
    <molecule id="Q8N4S0-2"/>
</dbReference>
<dbReference type="Pumba" id="Q8N4S0"/>
<dbReference type="Antibodypedia" id="31692">
    <property type="antibodies" value="84 antibodies from 14 providers"/>
</dbReference>
<dbReference type="DNASU" id="79780"/>
<dbReference type="Ensembl" id="ENST00000278520.9">
    <molecule id="Q8N4S0-1"/>
    <property type="protein sequence ID" value="ENSP00000278520.5"/>
    <property type="gene ID" value="ENSG00000149231.16"/>
</dbReference>
<dbReference type="Ensembl" id="ENST00000423339.2">
    <molecule id="Q8N4S0-1"/>
    <property type="protein sequence ID" value="ENSP00000397156.2"/>
    <property type="gene ID" value="ENSG00000149231.16"/>
</dbReference>
<dbReference type="Ensembl" id="ENST00000530106.2">
    <molecule id="Q8N4S0-2"/>
    <property type="protein sequence ID" value="ENSP00000495640.1"/>
    <property type="gene ID" value="ENSG00000149231.16"/>
</dbReference>
<dbReference type="Ensembl" id="ENST00000530203.2">
    <molecule id="Q8N4S0-1"/>
    <property type="protein sequence ID" value="ENSP00000431148.2"/>
    <property type="gene ID" value="ENSG00000149231.16"/>
</dbReference>
<dbReference type="Ensembl" id="ENST00000644686.1">
    <molecule id="Q8N4S0-1"/>
    <property type="protein sequence ID" value="ENSP00000495081.1"/>
    <property type="gene ID" value="ENSG00000149231.16"/>
</dbReference>
<dbReference type="Ensembl" id="ENST00000645366.1">
    <molecule id="Q8N4S0-1"/>
    <property type="protein sequence ID" value="ENSP00000494629.1"/>
    <property type="gene ID" value="ENSG00000149231.16"/>
</dbReference>
<dbReference type="Ensembl" id="ENST00000645439.1">
    <molecule id="Q8N4S0-1"/>
    <property type="protein sequence ID" value="ENSP00000495063.1"/>
    <property type="gene ID" value="ENSG00000149231.16"/>
</dbReference>
<dbReference type="Ensembl" id="ENST00000645500.1">
    <molecule id="Q8N4S0-1"/>
    <property type="protein sequence ID" value="ENSP00000495485.1"/>
    <property type="gene ID" value="ENSG00000149231.16"/>
</dbReference>
<dbReference type="Ensembl" id="ENST00000646638.1">
    <molecule id="Q8N4S0-1"/>
    <property type="protein sequence ID" value="ENSP00000494657.1"/>
    <property type="gene ID" value="ENSG00000149231.16"/>
</dbReference>
<dbReference type="Ensembl" id="ENST00000646818.2">
    <molecule id="Q8N4S0-1"/>
    <property type="protein sequence ID" value="ENSP00000496393.1"/>
    <property type="gene ID" value="ENSG00000149231.16"/>
</dbReference>
<dbReference type="Ensembl" id="ENST00000679708.1">
    <molecule id="Q8N4S0-1"/>
    <property type="protein sequence ID" value="ENSP00000506371.1"/>
    <property type="gene ID" value="ENSG00000149231.16"/>
</dbReference>
<dbReference type="Ensembl" id="ENST00000679788.1">
    <molecule id="Q8N4S0-1"/>
    <property type="protein sequence ID" value="ENSP00000505510.1"/>
    <property type="gene ID" value="ENSG00000149231.16"/>
</dbReference>
<dbReference type="Ensembl" id="ENST00000679856.1">
    <molecule id="Q8N4S0-1"/>
    <property type="protein sequence ID" value="ENSP00000505833.1"/>
    <property type="gene ID" value="ENSG00000149231.16"/>
</dbReference>
<dbReference type="Ensembl" id="ENST00000679960.1">
    <molecule id="Q8N4S0-1"/>
    <property type="protein sequence ID" value="ENSP00000506164.1"/>
    <property type="gene ID" value="ENSG00000149231.16"/>
</dbReference>
<dbReference type="Ensembl" id="ENST00000680171.1">
    <molecule id="Q8N4S0-1"/>
    <property type="protein sequence ID" value="ENSP00000505858.1"/>
    <property type="gene ID" value="ENSG00000149231.16"/>
</dbReference>
<dbReference type="Ensembl" id="ENST00000680763.1">
    <molecule id="Q8N4S0-1"/>
    <property type="protein sequence ID" value="ENSP00000504912.1"/>
    <property type="gene ID" value="ENSG00000149231.16"/>
</dbReference>
<dbReference type="Ensembl" id="ENST00000680979.1">
    <molecule id="Q8N4S0-1"/>
    <property type="protein sequence ID" value="ENSP00000505977.1"/>
    <property type="gene ID" value="ENSG00000149231.16"/>
</dbReference>
<dbReference type="Ensembl" id="ENST00000681164.1">
    <molecule id="Q8N4S0-1"/>
    <property type="protein sequence ID" value="ENSP00000506296.1"/>
    <property type="gene ID" value="ENSG00000149231.16"/>
</dbReference>
<dbReference type="GeneID" id="79780"/>
<dbReference type="KEGG" id="hsa:79780"/>
<dbReference type="MANE-Select" id="ENST00000646818.2">
    <property type="protein sequence ID" value="ENSP00000496393.1"/>
    <property type="RefSeq nucleotide sequence ID" value="NM_024725.4"/>
    <property type="RefSeq protein sequence ID" value="NP_079001.2"/>
</dbReference>
<dbReference type="UCSC" id="uc009ywp.4">
    <molecule id="Q8N4S0-1"/>
    <property type="organism name" value="human"/>
</dbReference>
<dbReference type="AGR" id="HGNC:26282"/>
<dbReference type="CTD" id="79780"/>
<dbReference type="DisGeNET" id="79780"/>
<dbReference type="GeneCards" id="CCDC82"/>
<dbReference type="HGNC" id="HGNC:26282">
    <property type="gene designation" value="CCDC82"/>
</dbReference>
<dbReference type="HPA" id="ENSG00000149231">
    <property type="expression patterns" value="Low tissue specificity"/>
</dbReference>
<dbReference type="MalaCards" id="CCDC82"/>
<dbReference type="MIM" id="619870">
    <property type="type" value="gene"/>
</dbReference>
<dbReference type="neXtProt" id="NX_Q8N4S0"/>
<dbReference type="OpenTargets" id="ENSG00000149231"/>
<dbReference type="PharmGKB" id="PA143485431"/>
<dbReference type="VEuPathDB" id="HostDB:ENSG00000149231"/>
<dbReference type="eggNOG" id="KOG4805">
    <property type="taxonomic scope" value="Eukaryota"/>
</dbReference>
<dbReference type="GeneTree" id="ENSGT00390000004986"/>
<dbReference type="HOGENOM" id="CLU_037130_0_0_1"/>
<dbReference type="InParanoid" id="Q8N4S0"/>
<dbReference type="OMA" id="HYVHFKR"/>
<dbReference type="OrthoDB" id="21499at2759"/>
<dbReference type="PAN-GO" id="Q8N4S0">
    <property type="GO annotations" value="1 GO annotation based on evolutionary models"/>
</dbReference>
<dbReference type="PhylomeDB" id="Q8N4S0"/>
<dbReference type="TreeFam" id="TF328837"/>
<dbReference type="PathwayCommons" id="Q8N4S0"/>
<dbReference type="SignaLink" id="Q8N4S0"/>
<dbReference type="BioGRID-ORCS" id="79780">
    <property type="hits" value="31 hits in 1153 CRISPR screens"/>
</dbReference>
<dbReference type="ChiTaRS" id="CCDC82">
    <property type="organism name" value="human"/>
</dbReference>
<dbReference type="GenomeRNAi" id="79780"/>
<dbReference type="Pharos" id="Q8N4S0">
    <property type="development level" value="Tdark"/>
</dbReference>
<dbReference type="PRO" id="PR:Q8N4S0"/>
<dbReference type="Proteomes" id="UP000005640">
    <property type="component" value="Chromosome 11"/>
</dbReference>
<dbReference type="RNAct" id="Q8N4S0">
    <property type="molecule type" value="protein"/>
</dbReference>
<dbReference type="Bgee" id="ENSG00000149231">
    <property type="expression patterns" value="Expressed in calcaneal tendon and 182 other cell types or tissues"/>
</dbReference>
<dbReference type="ExpressionAtlas" id="Q8N4S0">
    <property type="expression patterns" value="baseline and differential"/>
</dbReference>
<dbReference type="GO" id="GO:0005634">
    <property type="term" value="C:nucleus"/>
    <property type="evidence" value="ECO:0000318"/>
    <property type="project" value="GO_Central"/>
</dbReference>
<dbReference type="InterPro" id="IPR025244">
    <property type="entry name" value="CCDC82"/>
</dbReference>
<dbReference type="InterPro" id="IPR025451">
    <property type="entry name" value="DUF4211"/>
</dbReference>
<dbReference type="PANTHER" id="PTHR14689:SF0">
    <property type="entry name" value="COILED-COIL DOMAIN-CONTAINING PROTEIN 82"/>
    <property type="match status" value="1"/>
</dbReference>
<dbReference type="PANTHER" id="PTHR14689">
    <property type="entry name" value="PHORBOL-ESTER_DAG-TYPE DOMAIN-CONTAINING PROTEIN"/>
    <property type="match status" value="1"/>
</dbReference>
<dbReference type="Pfam" id="PF13846">
    <property type="entry name" value="DUF4196"/>
    <property type="match status" value="2"/>
</dbReference>
<dbReference type="Pfam" id="PF13926">
    <property type="entry name" value="DUF4211"/>
    <property type="match status" value="1"/>
</dbReference>
<proteinExistence type="evidence at protein level"/>
<accession>Q8N4S0</accession>
<accession>B3KPU7</accession>
<accession>Q8WV71</accession>
<accession>Q9H2Q5</accession>
<accession>Q9H5E3</accession>
<comment type="alternative products">
    <event type="alternative splicing"/>
    <isoform>
        <id>Q8N4S0-1</id>
        <name>1</name>
        <sequence type="displayed"/>
    </isoform>
    <isoform>
        <id>Q8N4S0-2</id>
        <name>2</name>
        <sequence type="described" ref="VSP_035403 VSP_035404"/>
    </isoform>
</comment>
<comment type="sequence caution" evidence="7">
    <conflict type="frameshift">
        <sequence resource="EMBL-CDS" id="BAB15683"/>
    </conflict>
</comment>